<proteinExistence type="inferred from homology"/>
<comment type="function">
    <text evidence="1">Catalyzes the conversion of dethiobiotin (DTB) to biotin by the insertion of a sulfur atom into dethiobiotin via a radical-based mechanism.</text>
</comment>
<comment type="catalytic activity">
    <reaction evidence="1">
        <text>(4R,5S)-dethiobiotin + (sulfur carrier)-SH + 2 reduced [2Fe-2S]-[ferredoxin] + 2 S-adenosyl-L-methionine = (sulfur carrier)-H + biotin + 2 5'-deoxyadenosine + 2 L-methionine + 2 oxidized [2Fe-2S]-[ferredoxin]</text>
        <dbReference type="Rhea" id="RHEA:22060"/>
        <dbReference type="Rhea" id="RHEA-COMP:10000"/>
        <dbReference type="Rhea" id="RHEA-COMP:10001"/>
        <dbReference type="Rhea" id="RHEA-COMP:14737"/>
        <dbReference type="Rhea" id="RHEA-COMP:14739"/>
        <dbReference type="ChEBI" id="CHEBI:17319"/>
        <dbReference type="ChEBI" id="CHEBI:29917"/>
        <dbReference type="ChEBI" id="CHEBI:33737"/>
        <dbReference type="ChEBI" id="CHEBI:33738"/>
        <dbReference type="ChEBI" id="CHEBI:57586"/>
        <dbReference type="ChEBI" id="CHEBI:57844"/>
        <dbReference type="ChEBI" id="CHEBI:59789"/>
        <dbReference type="ChEBI" id="CHEBI:64428"/>
        <dbReference type="ChEBI" id="CHEBI:149473"/>
        <dbReference type="EC" id="2.8.1.6"/>
    </reaction>
</comment>
<comment type="cofactor">
    <cofactor evidence="1">
        <name>[4Fe-4S] cluster</name>
        <dbReference type="ChEBI" id="CHEBI:49883"/>
    </cofactor>
    <text evidence="1">Binds 1 [4Fe-4S] cluster. The cluster is coordinated with 3 cysteines and an exchangeable S-adenosyl-L-methionine.</text>
</comment>
<comment type="cofactor">
    <cofactor evidence="1">
        <name>[2Fe-2S] cluster</name>
        <dbReference type="ChEBI" id="CHEBI:190135"/>
    </cofactor>
    <text evidence="1">Binds 1 [2Fe-2S] cluster. The cluster is coordinated with 3 cysteines and 1 arginine.</text>
</comment>
<comment type="pathway">
    <text evidence="1">Cofactor biosynthesis; biotin biosynthesis; biotin from 7,8-diaminononanoate: step 2/2.</text>
</comment>
<comment type="subunit">
    <text evidence="1">Homodimer.</text>
</comment>
<comment type="similarity">
    <text evidence="1">Belongs to the radical SAM superfamily. Biotin synthase family.</text>
</comment>
<feature type="chain" id="PRO_0000381335" description="Biotin synthase">
    <location>
        <begin position="1"/>
        <end position="321"/>
    </location>
</feature>
<feature type="domain" description="Radical SAM core" evidence="2">
    <location>
        <begin position="37"/>
        <end position="264"/>
    </location>
</feature>
<feature type="binding site" evidence="1">
    <location>
        <position position="52"/>
    </location>
    <ligand>
        <name>[4Fe-4S] cluster</name>
        <dbReference type="ChEBI" id="CHEBI:49883"/>
        <note>4Fe-4S-S-AdoMet</note>
    </ligand>
</feature>
<feature type="binding site" evidence="1">
    <location>
        <position position="56"/>
    </location>
    <ligand>
        <name>[4Fe-4S] cluster</name>
        <dbReference type="ChEBI" id="CHEBI:49883"/>
        <note>4Fe-4S-S-AdoMet</note>
    </ligand>
</feature>
<feature type="binding site" evidence="1">
    <location>
        <position position="59"/>
    </location>
    <ligand>
        <name>[4Fe-4S] cluster</name>
        <dbReference type="ChEBI" id="CHEBI:49883"/>
        <note>4Fe-4S-S-AdoMet</note>
    </ligand>
</feature>
<feature type="binding site" evidence="1">
    <location>
        <position position="96"/>
    </location>
    <ligand>
        <name>[2Fe-2S] cluster</name>
        <dbReference type="ChEBI" id="CHEBI:190135"/>
    </ligand>
</feature>
<feature type="binding site" evidence="1">
    <location>
        <position position="127"/>
    </location>
    <ligand>
        <name>[2Fe-2S] cluster</name>
        <dbReference type="ChEBI" id="CHEBI:190135"/>
    </ligand>
</feature>
<feature type="binding site" evidence="1">
    <location>
        <position position="187"/>
    </location>
    <ligand>
        <name>[2Fe-2S] cluster</name>
        <dbReference type="ChEBI" id="CHEBI:190135"/>
    </ligand>
</feature>
<feature type="binding site" evidence="1">
    <location>
        <position position="259"/>
    </location>
    <ligand>
        <name>[2Fe-2S] cluster</name>
        <dbReference type="ChEBI" id="CHEBI:190135"/>
    </ligand>
</feature>
<accession>Q83CU5</accession>
<evidence type="ECO:0000255" key="1">
    <source>
        <dbReference type="HAMAP-Rule" id="MF_01694"/>
    </source>
</evidence>
<evidence type="ECO:0000255" key="2">
    <source>
        <dbReference type="PROSITE-ProRule" id="PRU01266"/>
    </source>
</evidence>
<name>BIOB_COXBU</name>
<organism>
    <name type="scientific">Coxiella burnetii (strain RSA 493 / Nine Mile phase I)</name>
    <dbReference type="NCBI Taxonomy" id="227377"/>
    <lineage>
        <taxon>Bacteria</taxon>
        <taxon>Pseudomonadati</taxon>
        <taxon>Pseudomonadota</taxon>
        <taxon>Gammaproteobacteria</taxon>
        <taxon>Legionellales</taxon>
        <taxon>Coxiellaceae</taxon>
        <taxon>Coxiella</taxon>
    </lineage>
</organism>
<reference key="1">
    <citation type="journal article" date="2003" name="Proc. Natl. Acad. Sci. U.S.A.">
        <title>Complete genome sequence of the Q-fever pathogen, Coxiella burnetii.</title>
        <authorList>
            <person name="Seshadri R."/>
            <person name="Paulsen I.T."/>
            <person name="Eisen J.A."/>
            <person name="Read T.D."/>
            <person name="Nelson K.E."/>
            <person name="Nelson W.C."/>
            <person name="Ward N.L."/>
            <person name="Tettelin H."/>
            <person name="Davidsen T.M."/>
            <person name="Beanan M.J."/>
            <person name="DeBoy R.T."/>
            <person name="Daugherty S.C."/>
            <person name="Brinkac L.M."/>
            <person name="Madupu R."/>
            <person name="Dodson R.J."/>
            <person name="Khouri H.M."/>
            <person name="Lee K.H."/>
            <person name="Carty H.A."/>
            <person name="Scanlan D."/>
            <person name="Heinzen R.A."/>
            <person name="Thompson H.A."/>
            <person name="Samuel J.E."/>
            <person name="Fraser C.M."/>
            <person name="Heidelberg J.F."/>
        </authorList>
    </citation>
    <scope>NUCLEOTIDE SEQUENCE [LARGE SCALE GENOMIC DNA]</scope>
    <source>
        <strain>RSA 493 / Nine Mile phase I</strain>
    </source>
</reference>
<sequence length="321" mass="36252">MKGRNWNQASVAKLFELPFFELLYKAYETHRSHFDVRDMELCTLSSIKTGTCPEDCAYCPQSGHYKTDVEREKLINLEAVLEQAKVAKENGARRFCMGAAWRSPPKRELPKVLEMIKSVKALGLETCVTLGMLDQEQALQLKEAGLDFYNHNLDTSPEFYKKIITTRTYQDRMETLKNVRNAGINVCCGGILGMGESRADRIQLLLELYQLPEPPTSIPINQLIPIKGTPLENTKAIDPFEFIKTIAITRLLFPTSVIRLSAGREAMSDELQAWCFMAGANSIFYGDKLLTAKNPGQNRDVNLLKKLGLKVPVLTEEYACY</sequence>
<gene>
    <name evidence="1" type="primary">bioB</name>
    <name type="ordered locus">CBU_1007</name>
</gene>
<keyword id="KW-0001">2Fe-2S</keyword>
<keyword id="KW-0004">4Fe-4S</keyword>
<keyword id="KW-0093">Biotin biosynthesis</keyword>
<keyword id="KW-0408">Iron</keyword>
<keyword id="KW-0411">Iron-sulfur</keyword>
<keyword id="KW-0479">Metal-binding</keyword>
<keyword id="KW-1185">Reference proteome</keyword>
<keyword id="KW-0949">S-adenosyl-L-methionine</keyword>
<keyword id="KW-0808">Transferase</keyword>
<protein>
    <recommendedName>
        <fullName evidence="1">Biotin synthase</fullName>
        <ecNumber evidence="1">2.8.1.6</ecNumber>
    </recommendedName>
</protein>
<dbReference type="EC" id="2.8.1.6" evidence="1"/>
<dbReference type="EMBL" id="AE016828">
    <property type="protein sequence ID" value="AAO90528.1"/>
    <property type="molecule type" value="Genomic_DNA"/>
</dbReference>
<dbReference type="RefSeq" id="NP_820014.1">
    <property type="nucleotide sequence ID" value="NC_002971.4"/>
</dbReference>
<dbReference type="RefSeq" id="WP_005768604.1">
    <property type="nucleotide sequence ID" value="NZ_CDBG01000001.1"/>
</dbReference>
<dbReference type="SMR" id="Q83CU5"/>
<dbReference type="STRING" id="227377.CBU_1007"/>
<dbReference type="EnsemblBacteria" id="AAO90528">
    <property type="protein sequence ID" value="AAO90528"/>
    <property type="gene ID" value="CBU_1007"/>
</dbReference>
<dbReference type="GeneID" id="1208903"/>
<dbReference type="KEGG" id="cbu:CBU_1007"/>
<dbReference type="PATRIC" id="fig|227377.7.peg.1000"/>
<dbReference type="eggNOG" id="COG0502">
    <property type="taxonomic scope" value="Bacteria"/>
</dbReference>
<dbReference type="HOGENOM" id="CLU_033172_1_2_6"/>
<dbReference type="OrthoDB" id="9786826at2"/>
<dbReference type="UniPathway" id="UPA00078">
    <property type="reaction ID" value="UER00162"/>
</dbReference>
<dbReference type="Proteomes" id="UP000002671">
    <property type="component" value="Chromosome"/>
</dbReference>
<dbReference type="GO" id="GO:0051537">
    <property type="term" value="F:2 iron, 2 sulfur cluster binding"/>
    <property type="evidence" value="ECO:0000318"/>
    <property type="project" value="GO_Central"/>
</dbReference>
<dbReference type="GO" id="GO:0051539">
    <property type="term" value="F:4 iron, 4 sulfur cluster binding"/>
    <property type="evidence" value="ECO:0007669"/>
    <property type="project" value="UniProtKB-KW"/>
</dbReference>
<dbReference type="GO" id="GO:0004076">
    <property type="term" value="F:biotin synthase activity"/>
    <property type="evidence" value="ECO:0000318"/>
    <property type="project" value="GO_Central"/>
</dbReference>
<dbReference type="GO" id="GO:0005506">
    <property type="term" value="F:iron ion binding"/>
    <property type="evidence" value="ECO:0007669"/>
    <property type="project" value="UniProtKB-UniRule"/>
</dbReference>
<dbReference type="GO" id="GO:0009102">
    <property type="term" value="P:biotin biosynthetic process"/>
    <property type="evidence" value="ECO:0000318"/>
    <property type="project" value="GO_Central"/>
</dbReference>
<dbReference type="CDD" id="cd01335">
    <property type="entry name" value="Radical_SAM"/>
    <property type="match status" value="1"/>
</dbReference>
<dbReference type="FunFam" id="3.20.20.70:FF:000011">
    <property type="entry name" value="Biotin synthase"/>
    <property type="match status" value="1"/>
</dbReference>
<dbReference type="Gene3D" id="3.20.20.70">
    <property type="entry name" value="Aldolase class I"/>
    <property type="match status" value="1"/>
</dbReference>
<dbReference type="HAMAP" id="MF_01694">
    <property type="entry name" value="BioB"/>
    <property type="match status" value="1"/>
</dbReference>
<dbReference type="InterPro" id="IPR013785">
    <property type="entry name" value="Aldolase_TIM"/>
</dbReference>
<dbReference type="InterPro" id="IPR010722">
    <property type="entry name" value="BATS_dom"/>
</dbReference>
<dbReference type="InterPro" id="IPR002684">
    <property type="entry name" value="Biotin_synth/BioAB"/>
</dbReference>
<dbReference type="InterPro" id="IPR024177">
    <property type="entry name" value="Biotin_synthase"/>
</dbReference>
<dbReference type="InterPro" id="IPR006638">
    <property type="entry name" value="Elp3/MiaA/NifB-like_rSAM"/>
</dbReference>
<dbReference type="InterPro" id="IPR007197">
    <property type="entry name" value="rSAM"/>
</dbReference>
<dbReference type="NCBIfam" id="TIGR00433">
    <property type="entry name" value="bioB"/>
    <property type="match status" value="1"/>
</dbReference>
<dbReference type="PANTHER" id="PTHR22976">
    <property type="entry name" value="BIOTIN SYNTHASE"/>
    <property type="match status" value="1"/>
</dbReference>
<dbReference type="PANTHER" id="PTHR22976:SF2">
    <property type="entry name" value="BIOTIN SYNTHASE, MITOCHONDRIAL"/>
    <property type="match status" value="1"/>
</dbReference>
<dbReference type="Pfam" id="PF06968">
    <property type="entry name" value="BATS"/>
    <property type="match status" value="1"/>
</dbReference>
<dbReference type="Pfam" id="PF04055">
    <property type="entry name" value="Radical_SAM"/>
    <property type="match status" value="1"/>
</dbReference>
<dbReference type="PIRSF" id="PIRSF001619">
    <property type="entry name" value="Biotin_synth"/>
    <property type="match status" value="1"/>
</dbReference>
<dbReference type="SFLD" id="SFLDG01060">
    <property type="entry name" value="BATS_domain_containing"/>
    <property type="match status" value="1"/>
</dbReference>
<dbReference type="SFLD" id="SFLDF00272">
    <property type="entry name" value="biotin_synthase"/>
    <property type="match status" value="1"/>
</dbReference>
<dbReference type="SMART" id="SM00876">
    <property type="entry name" value="BATS"/>
    <property type="match status" value="1"/>
</dbReference>
<dbReference type="SMART" id="SM00729">
    <property type="entry name" value="Elp3"/>
    <property type="match status" value="1"/>
</dbReference>
<dbReference type="SUPFAM" id="SSF102114">
    <property type="entry name" value="Radical SAM enzymes"/>
    <property type="match status" value="1"/>
</dbReference>
<dbReference type="PROSITE" id="PS51918">
    <property type="entry name" value="RADICAL_SAM"/>
    <property type="match status" value="1"/>
</dbReference>